<accession>A4XNK8</accession>
<name>CYOE_ECTM1</name>
<feature type="chain" id="PRO_0000346002" description="Protoheme IX farnesyltransferase">
    <location>
        <begin position="1"/>
        <end position="299"/>
    </location>
</feature>
<feature type="transmembrane region" description="Helical" evidence="1">
    <location>
        <begin position="25"/>
        <end position="45"/>
    </location>
</feature>
<feature type="transmembrane region" description="Helical" evidence="1">
    <location>
        <begin position="47"/>
        <end position="67"/>
    </location>
</feature>
<feature type="transmembrane region" description="Helical" evidence="1">
    <location>
        <begin position="95"/>
        <end position="115"/>
    </location>
</feature>
<feature type="transmembrane region" description="Helical" evidence="1">
    <location>
        <begin position="119"/>
        <end position="139"/>
    </location>
</feature>
<feature type="transmembrane region" description="Helical" evidence="1">
    <location>
        <begin position="147"/>
        <end position="167"/>
    </location>
</feature>
<feature type="transmembrane region" description="Helical" evidence="1">
    <location>
        <begin position="173"/>
        <end position="193"/>
    </location>
</feature>
<feature type="transmembrane region" description="Helical" evidence="1">
    <location>
        <begin position="218"/>
        <end position="238"/>
    </location>
</feature>
<feature type="transmembrane region" description="Helical" evidence="1">
    <location>
        <begin position="243"/>
        <end position="263"/>
    </location>
</feature>
<feature type="transmembrane region" description="Helical" evidence="1">
    <location>
        <begin position="279"/>
        <end position="299"/>
    </location>
</feature>
<proteinExistence type="inferred from homology"/>
<comment type="function">
    <text evidence="1">Converts heme B (protoheme IX) to heme O by substitution of the vinyl group on carbon 2 of heme B porphyrin ring with a hydroxyethyl farnesyl side group.</text>
</comment>
<comment type="catalytic activity">
    <reaction evidence="1">
        <text>heme b + (2E,6E)-farnesyl diphosphate + H2O = Fe(II)-heme o + diphosphate</text>
        <dbReference type="Rhea" id="RHEA:28070"/>
        <dbReference type="ChEBI" id="CHEBI:15377"/>
        <dbReference type="ChEBI" id="CHEBI:33019"/>
        <dbReference type="ChEBI" id="CHEBI:60344"/>
        <dbReference type="ChEBI" id="CHEBI:60530"/>
        <dbReference type="ChEBI" id="CHEBI:175763"/>
        <dbReference type="EC" id="2.5.1.141"/>
    </reaction>
</comment>
<comment type="pathway">
    <text evidence="1">Porphyrin-containing compound metabolism; heme O biosynthesis; heme O from protoheme: step 1/1.</text>
</comment>
<comment type="subcellular location">
    <subcellularLocation>
        <location evidence="1">Cell inner membrane</location>
        <topology evidence="1">Multi-pass membrane protein</topology>
    </subcellularLocation>
</comment>
<comment type="miscellaneous">
    <text evidence="1">Carbon 2 of the heme B porphyrin ring is defined according to the Fischer nomenclature.</text>
</comment>
<comment type="similarity">
    <text evidence="1">Belongs to the UbiA prenyltransferase family. Protoheme IX farnesyltransferase subfamily.</text>
</comment>
<sequence length="299" mass="32842">MATVLRAHSEHATWRDYLELTKPRVVLLMLITSLVGMFLATRAGVPWTVLLFGNLGIGLCAGAAAAVNHVVDRRIDSIMARTHKRPVTAGRVSPAAAIAFALLLATAGMGLLLLFTNQLAAWLTLASLLGYAVIYTGFLKRATPQNIVIGGLAGAAPPLLGWVAVTGHLSAEPLLLVLIIFAWTPPHFWALAIHRKAEYAKADIPMLPVTHGEHYTKVHILLYTLVMFAVTLLPYAIHMSGPLYLVCALLLGARFLHWAWVLYRDSKPHAAINTFKYSIWYLFLLFIALLADHYLLLNI</sequence>
<protein>
    <recommendedName>
        <fullName evidence="1">Protoheme IX farnesyltransferase</fullName>
        <ecNumber evidence="1">2.5.1.141</ecNumber>
    </recommendedName>
    <alternativeName>
        <fullName evidence="1">Heme B farnesyltransferase</fullName>
    </alternativeName>
    <alternativeName>
        <fullName evidence="1">Heme O synthase</fullName>
    </alternativeName>
</protein>
<gene>
    <name evidence="1" type="primary">cyoE</name>
    <name type="ordered locus">Pmen_0150</name>
</gene>
<organism>
    <name type="scientific">Ectopseudomonas mendocina (strain ymp)</name>
    <name type="common">Pseudomonas mendocina</name>
    <dbReference type="NCBI Taxonomy" id="399739"/>
    <lineage>
        <taxon>Bacteria</taxon>
        <taxon>Pseudomonadati</taxon>
        <taxon>Pseudomonadota</taxon>
        <taxon>Gammaproteobacteria</taxon>
        <taxon>Pseudomonadales</taxon>
        <taxon>Pseudomonadaceae</taxon>
        <taxon>Ectopseudomonas</taxon>
    </lineage>
</organism>
<reference key="1">
    <citation type="submission" date="2007-04" db="EMBL/GenBank/DDBJ databases">
        <title>Complete sequence of Pseudomonas mendocina ymp.</title>
        <authorList>
            <consortium name="US DOE Joint Genome Institute"/>
            <person name="Copeland A."/>
            <person name="Lucas S."/>
            <person name="Lapidus A."/>
            <person name="Barry K."/>
            <person name="Glavina del Rio T."/>
            <person name="Dalin E."/>
            <person name="Tice H."/>
            <person name="Pitluck S."/>
            <person name="Kiss H."/>
            <person name="Brettin T."/>
            <person name="Detter J.C."/>
            <person name="Bruce D."/>
            <person name="Han C."/>
            <person name="Schmutz J."/>
            <person name="Larimer F."/>
            <person name="Land M."/>
            <person name="Hauser L."/>
            <person name="Kyrpides N."/>
            <person name="Mikhailova N."/>
            <person name="Hersman L."/>
            <person name="Dubois J."/>
            <person name="Maurice P."/>
            <person name="Richardson P."/>
        </authorList>
    </citation>
    <scope>NUCLEOTIDE SEQUENCE [LARGE SCALE GENOMIC DNA]</scope>
    <source>
        <strain>ymp</strain>
    </source>
</reference>
<evidence type="ECO:0000255" key="1">
    <source>
        <dbReference type="HAMAP-Rule" id="MF_00154"/>
    </source>
</evidence>
<keyword id="KW-0997">Cell inner membrane</keyword>
<keyword id="KW-1003">Cell membrane</keyword>
<keyword id="KW-0350">Heme biosynthesis</keyword>
<keyword id="KW-0472">Membrane</keyword>
<keyword id="KW-0808">Transferase</keyword>
<keyword id="KW-0812">Transmembrane</keyword>
<keyword id="KW-1133">Transmembrane helix</keyword>
<dbReference type="EC" id="2.5.1.141" evidence="1"/>
<dbReference type="EMBL" id="CP000680">
    <property type="protein sequence ID" value="ABP82924.1"/>
    <property type="molecule type" value="Genomic_DNA"/>
</dbReference>
<dbReference type="SMR" id="A4XNK8"/>
<dbReference type="STRING" id="399739.Pmen_0150"/>
<dbReference type="KEGG" id="pmy:Pmen_0150"/>
<dbReference type="PATRIC" id="fig|399739.8.peg.151"/>
<dbReference type="eggNOG" id="COG0109">
    <property type="taxonomic scope" value="Bacteria"/>
</dbReference>
<dbReference type="HOGENOM" id="CLU_029631_0_2_6"/>
<dbReference type="OrthoDB" id="9814417at2"/>
<dbReference type="UniPathway" id="UPA00834">
    <property type="reaction ID" value="UER00712"/>
</dbReference>
<dbReference type="GO" id="GO:0005886">
    <property type="term" value="C:plasma membrane"/>
    <property type="evidence" value="ECO:0007669"/>
    <property type="project" value="UniProtKB-SubCell"/>
</dbReference>
<dbReference type="GO" id="GO:0008495">
    <property type="term" value="F:protoheme IX farnesyltransferase activity"/>
    <property type="evidence" value="ECO:0007669"/>
    <property type="project" value="UniProtKB-UniRule"/>
</dbReference>
<dbReference type="GO" id="GO:0048034">
    <property type="term" value="P:heme O biosynthetic process"/>
    <property type="evidence" value="ECO:0007669"/>
    <property type="project" value="UniProtKB-UniRule"/>
</dbReference>
<dbReference type="CDD" id="cd13957">
    <property type="entry name" value="PT_UbiA_Cox10"/>
    <property type="match status" value="1"/>
</dbReference>
<dbReference type="FunFam" id="1.10.357.140:FF:000001">
    <property type="entry name" value="Protoheme IX farnesyltransferase"/>
    <property type="match status" value="1"/>
</dbReference>
<dbReference type="Gene3D" id="1.10.357.140">
    <property type="entry name" value="UbiA prenyltransferase"/>
    <property type="match status" value="1"/>
</dbReference>
<dbReference type="HAMAP" id="MF_00154">
    <property type="entry name" value="CyoE_CtaB"/>
    <property type="match status" value="1"/>
</dbReference>
<dbReference type="InterPro" id="IPR006369">
    <property type="entry name" value="Protohaem_IX_farnesylTrfase"/>
</dbReference>
<dbReference type="InterPro" id="IPR000537">
    <property type="entry name" value="UbiA_prenyltransferase"/>
</dbReference>
<dbReference type="InterPro" id="IPR030470">
    <property type="entry name" value="UbiA_prenylTrfase_CS"/>
</dbReference>
<dbReference type="InterPro" id="IPR044878">
    <property type="entry name" value="UbiA_sf"/>
</dbReference>
<dbReference type="NCBIfam" id="TIGR01473">
    <property type="entry name" value="cyoE_ctaB"/>
    <property type="match status" value="1"/>
</dbReference>
<dbReference type="NCBIfam" id="NF003349">
    <property type="entry name" value="PRK04375.1-2"/>
    <property type="match status" value="1"/>
</dbReference>
<dbReference type="PANTHER" id="PTHR43448:SF7">
    <property type="entry name" value="4-HYDROXYBENZOATE SOLANESYLTRANSFERASE"/>
    <property type="match status" value="1"/>
</dbReference>
<dbReference type="PANTHER" id="PTHR43448">
    <property type="entry name" value="PROTOHEME IX FARNESYLTRANSFERASE, MITOCHONDRIAL"/>
    <property type="match status" value="1"/>
</dbReference>
<dbReference type="Pfam" id="PF01040">
    <property type="entry name" value="UbiA"/>
    <property type="match status" value="1"/>
</dbReference>
<dbReference type="PROSITE" id="PS00943">
    <property type="entry name" value="UBIA"/>
    <property type="match status" value="1"/>
</dbReference>